<gene>
    <name evidence="1" type="primary">rps16</name>
</gene>
<feature type="chain" id="PRO_0000167293" description="Small ribosomal subunit protein bS16c">
    <location>
        <begin position="1"/>
        <end position="84"/>
    </location>
</feature>
<proteinExistence type="evidence at transcript level"/>
<name>RR16_ANTAG</name>
<organism>
    <name type="scientific">Anthoceros angustus</name>
    <name type="common">Hornwort</name>
    <name type="synonym">Anthoceros formosae</name>
    <dbReference type="NCBI Taxonomy" id="48387"/>
    <lineage>
        <taxon>Eukaryota</taxon>
        <taxon>Viridiplantae</taxon>
        <taxon>Streptophyta</taxon>
        <taxon>Embryophyta</taxon>
        <taxon>Anthocerotophyta</taxon>
        <taxon>Anthocerotopsida</taxon>
        <taxon>Anthocerotidae</taxon>
        <taxon>Anthocerotales</taxon>
        <taxon>Anthocerotaceae</taxon>
        <taxon>Anthoceros</taxon>
    </lineage>
</organism>
<geneLocation type="chloroplast"/>
<dbReference type="EMBL" id="AB086179">
    <property type="protein sequence ID" value="BAC55339.1"/>
    <property type="molecule type" value="Genomic_DNA"/>
</dbReference>
<dbReference type="EMBL" id="AB087431">
    <property type="protein sequence ID" value="BAC55430.1"/>
    <property type="molecule type" value="mRNA"/>
</dbReference>
<dbReference type="RefSeq" id="NP_777403.1">
    <property type="nucleotide sequence ID" value="NC_004543.1"/>
</dbReference>
<dbReference type="SMR" id="Q85CF2"/>
<dbReference type="GeneID" id="2553429"/>
<dbReference type="GO" id="GO:0009507">
    <property type="term" value="C:chloroplast"/>
    <property type="evidence" value="ECO:0007669"/>
    <property type="project" value="UniProtKB-SubCell"/>
</dbReference>
<dbReference type="GO" id="GO:0005739">
    <property type="term" value="C:mitochondrion"/>
    <property type="evidence" value="ECO:0007669"/>
    <property type="project" value="GOC"/>
</dbReference>
<dbReference type="GO" id="GO:0015935">
    <property type="term" value="C:small ribosomal subunit"/>
    <property type="evidence" value="ECO:0007669"/>
    <property type="project" value="TreeGrafter"/>
</dbReference>
<dbReference type="GO" id="GO:0003735">
    <property type="term" value="F:structural constituent of ribosome"/>
    <property type="evidence" value="ECO:0007669"/>
    <property type="project" value="InterPro"/>
</dbReference>
<dbReference type="GO" id="GO:0032543">
    <property type="term" value="P:mitochondrial translation"/>
    <property type="evidence" value="ECO:0007669"/>
    <property type="project" value="TreeGrafter"/>
</dbReference>
<dbReference type="Gene3D" id="3.30.1320.10">
    <property type="match status" value="1"/>
</dbReference>
<dbReference type="HAMAP" id="MF_00385">
    <property type="entry name" value="Ribosomal_bS16"/>
    <property type="match status" value="1"/>
</dbReference>
<dbReference type="InterPro" id="IPR000307">
    <property type="entry name" value="Ribosomal_bS16"/>
</dbReference>
<dbReference type="InterPro" id="IPR020592">
    <property type="entry name" value="Ribosomal_bS16_CS"/>
</dbReference>
<dbReference type="InterPro" id="IPR023803">
    <property type="entry name" value="Ribosomal_bS16_dom_sf"/>
</dbReference>
<dbReference type="NCBIfam" id="TIGR00002">
    <property type="entry name" value="S16"/>
    <property type="match status" value="1"/>
</dbReference>
<dbReference type="PANTHER" id="PTHR12919">
    <property type="entry name" value="30S RIBOSOMAL PROTEIN S16"/>
    <property type="match status" value="1"/>
</dbReference>
<dbReference type="PANTHER" id="PTHR12919:SF20">
    <property type="entry name" value="SMALL RIBOSOMAL SUBUNIT PROTEIN BS16M"/>
    <property type="match status" value="1"/>
</dbReference>
<dbReference type="Pfam" id="PF00886">
    <property type="entry name" value="Ribosomal_S16"/>
    <property type="match status" value="1"/>
</dbReference>
<dbReference type="SUPFAM" id="SSF54565">
    <property type="entry name" value="Ribosomal protein S16"/>
    <property type="match status" value="1"/>
</dbReference>
<dbReference type="PROSITE" id="PS00732">
    <property type="entry name" value="RIBOSOMAL_S16"/>
    <property type="match status" value="1"/>
</dbReference>
<accession>Q85CF2</accession>
<sequence>MVKLRLKRYGRKQQNTYRIVAIDAQSRREGRALEEVGFYNLRKDQTQLDILAIVNLIREGAQPTETVYDILRKAGIFERIKANP</sequence>
<evidence type="ECO:0000255" key="1">
    <source>
        <dbReference type="HAMAP-Rule" id="MF_00385"/>
    </source>
</evidence>
<evidence type="ECO:0000269" key="2">
    <source>
    </source>
</evidence>
<evidence type="ECO:0000269" key="3">
    <source>
    </source>
</evidence>
<evidence type="ECO:0000305" key="4"/>
<comment type="subcellular location">
    <subcellularLocation>
        <location>Plastid</location>
        <location>Chloroplast</location>
    </subcellularLocation>
</comment>
<comment type="RNA editing">
    <location>
        <position position="29" evidence="2 3"/>
    </location>
    <location>
        <position position="97" evidence="2 3"/>
    </location>
    <text>The nonsense codon at position 97 is modified to a sense codon.</text>
</comment>
<comment type="similarity">
    <text evidence="1">Belongs to the bacterial ribosomal protein bS16 family.</text>
</comment>
<protein>
    <recommendedName>
        <fullName evidence="1">Small ribosomal subunit protein bS16c</fullName>
    </recommendedName>
    <alternativeName>
        <fullName evidence="4">30S ribosomal protein S16, chloroplastic</fullName>
    </alternativeName>
</protein>
<keyword id="KW-0150">Chloroplast</keyword>
<keyword id="KW-0934">Plastid</keyword>
<keyword id="KW-0687">Ribonucleoprotein</keyword>
<keyword id="KW-0689">Ribosomal protein</keyword>
<keyword id="KW-0691">RNA editing</keyword>
<reference key="1">
    <citation type="journal article" date="2003" name="Nucleic Acids Res.">
        <title>The complete nucleotide sequence of the hornwort (Anthoceros formosae) chloroplast genome: insight into the earliest land plants.</title>
        <authorList>
            <person name="Kugita M."/>
            <person name="Kaneko A."/>
            <person name="Yamamoto Y."/>
            <person name="Takeya Y."/>
            <person name="Matsumoto T."/>
            <person name="Yoshinaga K."/>
        </authorList>
    </citation>
    <scope>NUCLEOTIDE SEQUENCE [LARGE SCALE GENOMIC DNA]</scope>
    <scope>RNA EDITING</scope>
</reference>
<reference key="2">
    <citation type="journal article" date="2003" name="Nucleic Acids Res.">
        <title>RNA editing in hornwort chloroplasts makes more than half the genes functional.</title>
        <authorList>
            <person name="Kugita M."/>
            <person name="Yamamoto Y."/>
            <person name="Fujikawa T."/>
            <person name="Matsumoto T."/>
            <person name="Yoshinaga K."/>
        </authorList>
    </citation>
    <scope>NUCLEOTIDE SEQUENCE [MRNA]</scope>
    <scope>RNA EDITING</scope>
    <source>
        <tissue>Thallus</tissue>
    </source>
</reference>